<keyword id="KW-1221">Calcium-activated potassium channel impairing toxin</keyword>
<keyword id="KW-0903">Direct protein sequencing</keyword>
<keyword id="KW-1015">Disulfide bond</keyword>
<keyword id="KW-0872">Ion channel impairing toxin</keyword>
<keyword id="KW-0632">Potassium channel impairing toxin</keyword>
<keyword id="KW-0964">Secreted</keyword>
<keyword id="KW-0800">Toxin</keyword>
<keyword id="KW-1220">Voltage-gated potassium channel impairing toxin</keyword>
<reference evidence="4" key="1">
    <citation type="journal article" date="2023" name="Toxins">
        <title>Characterization and Chemical Synthesis of Cm39 (alpha-KTx 4.8): A Scorpion Toxin That Inhibits Voltage-Gated K+ Channel KV1.2 and Small- and Intermediate-Conductance Ca2+-Activated K+ Channels KCa2.2 and KCa3.1.</title>
        <authorList>
            <person name="Naseem M.U."/>
            <person name="Gurrola-Briones G."/>
            <person name="Romero-Imbachi M.R."/>
            <person name="Borrego J."/>
            <person name="Carcamo-Noriega E."/>
            <person name="Beltran-Vidal J."/>
            <person name="Zamudio F.Z."/>
            <person name="Shakeel K."/>
            <person name="Possani L.D."/>
            <person name="Panyi G."/>
        </authorList>
    </citation>
    <scope>PROTEIN SEQUENCE</scope>
    <scope>FUNCTION</scope>
    <scope>SUBCELLULAR LOCATION</scope>
    <scope>MASS SPECTROMETRY</scope>
    <source>
        <tissue evidence="3">Venom</tissue>
    </source>
</reference>
<protein>
    <recommendedName>
        <fullName evidence="3">Potassium channel toxin alpha-KTx 4.8</fullName>
        <shortName evidence="3">Cm39</shortName>
    </recommendedName>
</protein>
<sequence length="37" mass="3988">TFINHKCKSSSECLPACKAAIGRASGKCINSTCKCYY</sequence>
<comment type="function">
    <text evidence="2">Reversible blocker of voltage-gated potassium channel Kv1.2/KCNA2 (Kd=65 nM) and calcium-activated potassium channels KCa2.2/KCNN2 (Kd=575 nM) and KCa3.1/KCNN4 (Kd=59 nM).</text>
</comment>
<comment type="subcellular location">
    <subcellularLocation>
        <location evidence="2">Secreted</location>
    </subcellularLocation>
</comment>
<comment type="tissue specificity">
    <text evidence="5">Expressed by the venom gland.</text>
</comment>
<comment type="mass spectrometry" mass="3980.2" method="Electrospray" evidence="2"/>
<comment type="miscellaneous">
    <text evidence="2">Negative results: does not inhibit the potassium channels Kv11.1/KCNH2, Kv1.3/KCNA3, Kv1.4/KCNA4, Kv1.5/KCNA5, Kv1.6/KCNA6, Kv11.1/KCNH2, KCa1.1/KCNN1, or the sodium channels Nav1.5/SCN7A and Nav1.4/SCN4A.</text>
</comment>
<comment type="similarity">
    <text evidence="4">Belongs to the short scorpion toxin superfamily. Potassium channel inhibitor family. Alpha-KTx 04 subfamily.</text>
</comment>
<feature type="peptide" id="PRO_0000458155" description="Potassium channel toxin alpha-KTx 4.8" evidence="2">
    <location>
        <begin position="1"/>
        <end position="37"/>
    </location>
</feature>
<feature type="site" description="Basic residue of the functional dyad, important for the interaction with Kv1.2/KCNA2 channel" evidence="1">
    <location>
        <position position="27"/>
    </location>
</feature>
<feature type="site" description="Aromatic residue of the functional dyad, important for the interaction with Kv1.2/KCNA2 channel" evidence="1">
    <location>
        <position position="36"/>
    </location>
</feature>
<feature type="disulfide bond" evidence="1">
    <location>
        <begin position="13"/>
        <end position="33"/>
    </location>
</feature>
<feature type="disulfide bond" evidence="1">
    <location>
        <begin position="17"/>
        <end position="35"/>
    </location>
</feature>
<proteinExistence type="evidence at protein level"/>
<accession>C0HM65</accession>
<organism evidence="3">
    <name type="scientific">Centruroides margaritatus</name>
    <name type="common">Central American bark Scorpion</name>
    <dbReference type="NCBI Taxonomy" id="29018"/>
    <lineage>
        <taxon>Eukaryota</taxon>
        <taxon>Metazoa</taxon>
        <taxon>Ecdysozoa</taxon>
        <taxon>Arthropoda</taxon>
        <taxon>Chelicerata</taxon>
        <taxon>Arachnida</taxon>
        <taxon>Scorpiones</taxon>
        <taxon>Buthida</taxon>
        <taxon>Buthoidea</taxon>
        <taxon>Buthidae</taxon>
        <taxon>Centruroides</taxon>
    </lineage>
</organism>
<name>KAX48_CENMA</name>
<dbReference type="SMR" id="C0HM65"/>
<dbReference type="GO" id="GO:0005576">
    <property type="term" value="C:extracellular region"/>
    <property type="evidence" value="ECO:0000314"/>
    <property type="project" value="UniProtKB"/>
</dbReference>
<dbReference type="GO" id="GO:0019870">
    <property type="term" value="F:potassium channel inhibitor activity"/>
    <property type="evidence" value="ECO:0000314"/>
    <property type="project" value="UniProtKB"/>
</dbReference>
<dbReference type="GO" id="GO:0140629">
    <property type="term" value="F:small conductance calcium-activated potassium channel inhibitor activity"/>
    <property type="evidence" value="ECO:0000314"/>
    <property type="project" value="UniProtKB"/>
</dbReference>
<dbReference type="GO" id="GO:0090729">
    <property type="term" value="F:toxin activity"/>
    <property type="evidence" value="ECO:0007669"/>
    <property type="project" value="UniProtKB-KW"/>
</dbReference>
<dbReference type="GO" id="GO:0044564">
    <property type="term" value="P:envenomation resulting in occlusion of the pore of voltage-gated potassium channel in another organism"/>
    <property type="evidence" value="ECO:0000314"/>
    <property type="project" value="UniProtKB"/>
</dbReference>
<dbReference type="Gene3D" id="3.30.30.10">
    <property type="entry name" value="Knottin, scorpion toxin-like"/>
    <property type="match status" value="1"/>
</dbReference>
<dbReference type="InterPro" id="IPR036574">
    <property type="entry name" value="Scorpion_toxin-like_sf"/>
</dbReference>
<dbReference type="InterPro" id="IPR001947">
    <property type="entry name" value="Scorpion_toxinS_K_inh"/>
</dbReference>
<dbReference type="Pfam" id="PF00451">
    <property type="entry name" value="Toxin_2"/>
    <property type="match status" value="1"/>
</dbReference>
<dbReference type="PRINTS" id="PR00286">
    <property type="entry name" value="CHARYBDTOXIN"/>
</dbReference>
<dbReference type="SUPFAM" id="SSF57095">
    <property type="entry name" value="Scorpion toxin-like"/>
    <property type="match status" value="1"/>
</dbReference>
<evidence type="ECO:0000250" key="1">
    <source>
        <dbReference type="UniProtKB" id="O46028"/>
    </source>
</evidence>
<evidence type="ECO:0000269" key="2">
    <source>
    </source>
</evidence>
<evidence type="ECO:0000303" key="3">
    <source>
    </source>
</evidence>
<evidence type="ECO:0000305" key="4"/>
<evidence type="ECO:0000305" key="5">
    <source>
    </source>
</evidence>